<name>PLSX_SALNS</name>
<protein>
    <recommendedName>
        <fullName evidence="1">Phosphate acyltransferase</fullName>
        <ecNumber evidence="1">2.3.1.274</ecNumber>
    </recommendedName>
    <alternativeName>
        <fullName evidence="1">Acyl-ACP phosphotransacylase</fullName>
    </alternativeName>
    <alternativeName>
        <fullName evidence="1">Acyl-[acyl-carrier-protein]--phosphate acyltransferase</fullName>
    </alternativeName>
    <alternativeName>
        <fullName evidence="1">Phosphate-acyl-ACP acyltransferase</fullName>
    </alternativeName>
</protein>
<feature type="chain" id="PRO_1000089936" description="Phosphate acyltransferase">
    <location>
        <begin position="1"/>
        <end position="359"/>
    </location>
</feature>
<evidence type="ECO:0000255" key="1">
    <source>
        <dbReference type="HAMAP-Rule" id="MF_00019"/>
    </source>
</evidence>
<gene>
    <name evidence="1" type="primary">plsX</name>
    <name type="ordered locus">SNSL254_A1290</name>
</gene>
<sequence>MTRLTLALDVMGGDFGPSVTVPAALQALNANSQLTLLLVGNPDIITPLLAKADFEQRSRLQIIPAQSVIASDARPSQAIRASRGTSMRVALELVKEGRAEACVSAGNTGALMGLAKLLLKPLEGIERPALVTVLPHQQKGKTVVLDLGANVDCDSTMLVQFAVMGAVLAEEVVGIKNPRVALLNIGEEETKGLDSIREASLMLKTVPTINYIGYLEANELLTGKTDVLVCDGFTGNVTLKTMEGVVRMFLSLLKSQGEGKKRSWWLLLLKRWLQKSLTRRFSHLNPDQYNGACLLGLRGTVIKSHGAANQRAFAVAIEQAVQAVQRQVPQRIAARLESVYPAGFEPLDDGKGVNLRAHR</sequence>
<dbReference type="EC" id="2.3.1.274" evidence="1"/>
<dbReference type="EMBL" id="CP001113">
    <property type="protein sequence ID" value="ACF61501.1"/>
    <property type="molecule type" value="Genomic_DNA"/>
</dbReference>
<dbReference type="RefSeq" id="WP_001518286.1">
    <property type="nucleotide sequence ID" value="NZ_CCMR01000003.1"/>
</dbReference>
<dbReference type="SMR" id="B4T324"/>
<dbReference type="KEGG" id="see:SNSL254_A1290"/>
<dbReference type="HOGENOM" id="CLU_039379_1_0_6"/>
<dbReference type="UniPathway" id="UPA00085"/>
<dbReference type="Proteomes" id="UP000008824">
    <property type="component" value="Chromosome"/>
</dbReference>
<dbReference type="GO" id="GO:0005737">
    <property type="term" value="C:cytoplasm"/>
    <property type="evidence" value="ECO:0007669"/>
    <property type="project" value="UniProtKB-SubCell"/>
</dbReference>
<dbReference type="GO" id="GO:0043811">
    <property type="term" value="F:phosphate:acyl-[acyl carrier protein] acyltransferase activity"/>
    <property type="evidence" value="ECO:0007669"/>
    <property type="project" value="UniProtKB-UniRule"/>
</dbReference>
<dbReference type="GO" id="GO:0006633">
    <property type="term" value="P:fatty acid biosynthetic process"/>
    <property type="evidence" value="ECO:0007669"/>
    <property type="project" value="UniProtKB-UniRule"/>
</dbReference>
<dbReference type="GO" id="GO:0008654">
    <property type="term" value="P:phospholipid biosynthetic process"/>
    <property type="evidence" value="ECO:0007669"/>
    <property type="project" value="UniProtKB-KW"/>
</dbReference>
<dbReference type="FunFam" id="3.40.718.10:FF:000008">
    <property type="entry name" value="Phosphate acyltransferase"/>
    <property type="match status" value="1"/>
</dbReference>
<dbReference type="Gene3D" id="3.40.718.10">
    <property type="entry name" value="Isopropylmalate Dehydrogenase"/>
    <property type="match status" value="1"/>
</dbReference>
<dbReference type="HAMAP" id="MF_00019">
    <property type="entry name" value="PlsX"/>
    <property type="match status" value="1"/>
</dbReference>
<dbReference type="InterPro" id="IPR003664">
    <property type="entry name" value="FA_synthesis"/>
</dbReference>
<dbReference type="InterPro" id="IPR012281">
    <property type="entry name" value="Phospholipid_synth_PlsX-like"/>
</dbReference>
<dbReference type="NCBIfam" id="TIGR00182">
    <property type="entry name" value="plsX"/>
    <property type="match status" value="1"/>
</dbReference>
<dbReference type="PANTHER" id="PTHR30100">
    <property type="entry name" value="FATTY ACID/PHOSPHOLIPID SYNTHESIS PROTEIN PLSX"/>
    <property type="match status" value="1"/>
</dbReference>
<dbReference type="PANTHER" id="PTHR30100:SF1">
    <property type="entry name" value="PHOSPHATE ACYLTRANSFERASE"/>
    <property type="match status" value="1"/>
</dbReference>
<dbReference type="Pfam" id="PF02504">
    <property type="entry name" value="FA_synthesis"/>
    <property type="match status" value="1"/>
</dbReference>
<dbReference type="PIRSF" id="PIRSF002465">
    <property type="entry name" value="Phsphlp_syn_PlsX"/>
    <property type="match status" value="1"/>
</dbReference>
<dbReference type="SUPFAM" id="SSF53659">
    <property type="entry name" value="Isocitrate/Isopropylmalate dehydrogenase-like"/>
    <property type="match status" value="1"/>
</dbReference>
<accession>B4T324</accession>
<comment type="function">
    <text evidence="1">Catalyzes the reversible formation of acyl-phosphate (acyl-PO(4)) from acyl-[acyl-carrier-protein] (acyl-ACP). This enzyme utilizes acyl-ACP as fatty acyl donor, but not acyl-CoA.</text>
</comment>
<comment type="catalytic activity">
    <reaction evidence="1">
        <text>a fatty acyl-[ACP] + phosphate = an acyl phosphate + holo-[ACP]</text>
        <dbReference type="Rhea" id="RHEA:42292"/>
        <dbReference type="Rhea" id="RHEA-COMP:9685"/>
        <dbReference type="Rhea" id="RHEA-COMP:14125"/>
        <dbReference type="ChEBI" id="CHEBI:43474"/>
        <dbReference type="ChEBI" id="CHEBI:59918"/>
        <dbReference type="ChEBI" id="CHEBI:64479"/>
        <dbReference type="ChEBI" id="CHEBI:138651"/>
        <dbReference type="EC" id="2.3.1.274"/>
    </reaction>
</comment>
<comment type="pathway">
    <text evidence="1">Lipid metabolism; phospholipid metabolism.</text>
</comment>
<comment type="subunit">
    <text evidence="1">Homodimer. Probably interacts with PlsY.</text>
</comment>
<comment type="subcellular location">
    <subcellularLocation>
        <location evidence="1">Cytoplasm</location>
    </subcellularLocation>
    <text evidence="1">Associated with the membrane possibly through PlsY.</text>
</comment>
<comment type="similarity">
    <text evidence="1">Belongs to the PlsX family.</text>
</comment>
<proteinExistence type="inferred from homology"/>
<reference key="1">
    <citation type="journal article" date="2011" name="J. Bacteriol.">
        <title>Comparative genomics of 28 Salmonella enterica isolates: evidence for CRISPR-mediated adaptive sublineage evolution.</title>
        <authorList>
            <person name="Fricke W.F."/>
            <person name="Mammel M.K."/>
            <person name="McDermott P.F."/>
            <person name="Tartera C."/>
            <person name="White D.G."/>
            <person name="Leclerc J.E."/>
            <person name="Ravel J."/>
            <person name="Cebula T.A."/>
        </authorList>
    </citation>
    <scope>NUCLEOTIDE SEQUENCE [LARGE SCALE GENOMIC DNA]</scope>
    <source>
        <strain>SL254</strain>
    </source>
</reference>
<organism>
    <name type="scientific">Salmonella newport (strain SL254)</name>
    <dbReference type="NCBI Taxonomy" id="423368"/>
    <lineage>
        <taxon>Bacteria</taxon>
        <taxon>Pseudomonadati</taxon>
        <taxon>Pseudomonadota</taxon>
        <taxon>Gammaproteobacteria</taxon>
        <taxon>Enterobacterales</taxon>
        <taxon>Enterobacteriaceae</taxon>
        <taxon>Salmonella</taxon>
    </lineage>
</organism>
<keyword id="KW-0963">Cytoplasm</keyword>
<keyword id="KW-0444">Lipid biosynthesis</keyword>
<keyword id="KW-0443">Lipid metabolism</keyword>
<keyword id="KW-0594">Phospholipid biosynthesis</keyword>
<keyword id="KW-1208">Phospholipid metabolism</keyword>
<keyword id="KW-0808">Transferase</keyword>